<keyword id="KW-0963">Cytoplasm</keyword>
<keyword id="KW-0489">Methyltransferase</keyword>
<keyword id="KW-0698">rRNA processing</keyword>
<keyword id="KW-0949">S-adenosyl-L-methionine</keyword>
<keyword id="KW-0808">Transferase</keyword>
<sequence length="206" mass="23284">MARSKSSAGWLKEHFDDYYVNKAKQDGWRSRAIYKLQEIDEKDQLFSKGMTVIDLGAAPGGWSQWTTHQTGDEGRVFALDILPVEPFAGVTFIQGDFQEDDVYQSLLDALDGREVDLVMSDMAPNMTGNKGVDIPRAMYLVELCVDLADQVLKPNGDLLMKVFQGEGYDQLLKSLREKYQKVLTRKPKASRPRSKEIYLLARGKKA</sequence>
<proteinExistence type="inferred from homology"/>
<name>RLME_HYDCU</name>
<protein>
    <recommendedName>
        <fullName evidence="1">Ribosomal RNA large subunit methyltransferase E</fullName>
        <ecNumber evidence="1">2.1.1.166</ecNumber>
    </recommendedName>
    <alternativeName>
        <fullName evidence="1">23S rRNA Um2552 methyltransferase</fullName>
    </alternativeName>
    <alternativeName>
        <fullName evidence="1">rRNA (uridine-2'-O-)-methyltransferase</fullName>
    </alternativeName>
</protein>
<dbReference type="EC" id="2.1.1.166" evidence="1"/>
<dbReference type="EMBL" id="CP000109">
    <property type="protein sequence ID" value="ABB41407.1"/>
    <property type="molecule type" value="Genomic_DNA"/>
</dbReference>
<dbReference type="SMR" id="Q31HG6"/>
<dbReference type="STRING" id="317025.Tcr_0811"/>
<dbReference type="KEGG" id="tcx:Tcr_0811"/>
<dbReference type="eggNOG" id="COG0293">
    <property type="taxonomic scope" value="Bacteria"/>
</dbReference>
<dbReference type="HOGENOM" id="CLU_009422_4_0_6"/>
<dbReference type="OrthoDB" id="9790080at2"/>
<dbReference type="GO" id="GO:0005737">
    <property type="term" value="C:cytoplasm"/>
    <property type="evidence" value="ECO:0007669"/>
    <property type="project" value="UniProtKB-SubCell"/>
</dbReference>
<dbReference type="GO" id="GO:0008650">
    <property type="term" value="F:rRNA (uridine-2'-O-)-methyltransferase activity"/>
    <property type="evidence" value="ECO:0007669"/>
    <property type="project" value="UniProtKB-UniRule"/>
</dbReference>
<dbReference type="CDD" id="cd02440">
    <property type="entry name" value="AdoMet_MTases"/>
    <property type="match status" value="1"/>
</dbReference>
<dbReference type="FunFam" id="3.40.50.150:FF:000005">
    <property type="entry name" value="Ribosomal RNA large subunit methyltransferase E"/>
    <property type="match status" value="1"/>
</dbReference>
<dbReference type="Gene3D" id="3.40.50.150">
    <property type="entry name" value="Vaccinia Virus protein VP39"/>
    <property type="match status" value="1"/>
</dbReference>
<dbReference type="HAMAP" id="MF_01547">
    <property type="entry name" value="RNA_methyltr_E"/>
    <property type="match status" value="1"/>
</dbReference>
<dbReference type="InterPro" id="IPR050082">
    <property type="entry name" value="RNA_methyltr_RlmE"/>
</dbReference>
<dbReference type="InterPro" id="IPR002877">
    <property type="entry name" value="RNA_MeTrfase_FtsJ_dom"/>
</dbReference>
<dbReference type="InterPro" id="IPR015507">
    <property type="entry name" value="rRNA-MeTfrase_E"/>
</dbReference>
<dbReference type="InterPro" id="IPR029063">
    <property type="entry name" value="SAM-dependent_MTases_sf"/>
</dbReference>
<dbReference type="NCBIfam" id="NF008390">
    <property type="entry name" value="PRK11188.1"/>
    <property type="match status" value="1"/>
</dbReference>
<dbReference type="PANTHER" id="PTHR10920">
    <property type="entry name" value="RIBOSOMAL RNA METHYLTRANSFERASE"/>
    <property type="match status" value="1"/>
</dbReference>
<dbReference type="PANTHER" id="PTHR10920:SF18">
    <property type="entry name" value="RRNA METHYLTRANSFERASE 2, MITOCHONDRIAL"/>
    <property type="match status" value="1"/>
</dbReference>
<dbReference type="Pfam" id="PF01728">
    <property type="entry name" value="FtsJ"/>
    <property type="match status" value="1"/>
</dbReference>
<dbReference type="PIRSF" id="PIRSF005461">
    <property type="entry name" value="23S_rRNA_mtase"/>
    <property type="match status" value="1"/>
</dbReference>
<dbReference type="SUPFAM" id="SSF53335">
    <property type="entry name" value="S-adenosyl-L-methionine-dependent methyltransferases"/>
    <property type="match status" value="1"/>
</dbReference>
<accession>Q31HG6</accession>
<feature type="chain" id="PRO_0000282810" description="Ribosomal RNA large subunit methyltransferase E">
    <location>
        <begin position="1"/>
        <end position="206"/>
    </location>
</feature>
<feature type="active site" description="Proton acceptor" evidence="1">
    <location>
        <position position="161"/>
    </location>
</feature>
<feature type="binding site" evidence="1">
    <location>
        <position position="60"/>
    </location>
    <ligand>
        <name>S-adenosyl-L-methionine</name>
        <dbReference type="ChEBI" id="CHEBI:59789"/>
    </ligand>
</feature>
<feature type="binding site" evidence="1">
    <location>
        <position position="62"/>
    </location>
    <ligand>
        <name>S-adenosyl-L-methionine</name>
        <dbReference type="ChEBI" id="CHEBI:59789"/>
    </ligand>
</feature>
<feature type="binding site" evidence="1">
    <location>
        <position position="80"/>
    </location>
    <ligand>
        <name>S-adenosyl-L-methionine</name>
        <dbReference type="ChEBI" id="CHEBI:59789"/>
    </ligand>
</feature>
<feature type="binding site" evidence="1">
    <location>
        <position position="96"/>
    </location>
    <ligand>
        <name>S-adenosyl-L-methionine</name>
        <dbReference type="ChEBI" id="CHEBI:59789"/>
    </ligand>
</feature>
<feature type="binding site" evidence="1">
    <location>
        <position position="121"/>
    </location>
    <ligand>
        <name>S-adenosyl-L-methionine</name>
        <dbReference type="ChEBI" id="CHEBI:59789"/>
    </ligand>
</feature>
<organism>
    <name type="scientific">Hydrogenovibrio crunogenus (strain DSM 25203 / XCL-2)</name>
    <name type="common">Thiomicrospira crunogena</name>
    <dbReference type="NCBI Taxonomy" id="317025"/>
    <lineage>
        <taxon>Bacteria</taxon>
        <taxon>Pseudomonadati</taxon>
        <taxon>Pseudomonadota</taxon>
        <taxon>Gammaproteobacteria</taxon>
        <taxon>Thiotrichales</taxon>
        <taxon>Piscirickettsiaceae</taxon>
        <taxon>Hydrogenovibrio</taxon>
    </lineage>
</organism>
<gene>
    <name evidence="1" type="primary">rlmE</name>
    <name evidence="1" type="synonym">ftsJ</name>
    <name evidence="1" type="synonym">rrmJ</name>
    <name type="ordered locus">Tcr_0811</name>
</gene>
<reference key="1">
    <citation type="journal article" date="2006" name="PLoS Biol.">
        <title>The genome of deep-sea vent chemolithoautotroph Thiomicrospira crunogena XCL-2.</title>
        <authorList>
            <person name="Scott K.M."/>
            <person name="Sievert S.M."/>
            <person name="Abril F.N."/>
            <person name="Ball L.A."/>
            <person name="Barrett C.J."/>
            <person name="Blake R.A."/>
            <person name="Boller A.J."/>
            <person name="Chain P.S.G."/>
            <person name="Clark J.A."/>
            <person name="Davis C.R."/>
            <person name="Detter C."/>
            <person name="Do K.F."/>
            <person name="Dobrinski K.P."/>
            <person name="Faza B.I."/>
            <person name="Fitzpatrick K.A."/>
            <person name="Freyermuth S.K."/>
            <person name="Harmer T.L."/>
            <person name="Hauser L.J."/>
            <person name="Huegler M."/>
            <person name="Kerfeld C.A."/>
            <person name="Klotz M.G."/>
            <person name="Kong W.W."/>
            <person name="Land M."/>
            <person name="Lapidus A."/>
            <person name="Larimer F.W."/>
            <person name="Longo D.L."/>
            <person name="Lucas S."/>
            <person name="Malfatti S.A."/>
            <person name="Massey S.E."/>
            <person name="Martin D.D."/>
            <person name="McCuddin Z."/>
            <person name="Meyer F."/>
            <person name="Moore J.L."/>
            <person name="Ocampo L.H. Jr."/>
            <person name="Paul J.H."/>
            <person name="Paulsen I.T."/>
            <person name="Reep D.K."/>
            <person name="Ren Q."/>
            <person name="Ross R.L."/>
            <person name="Sato P.Y."/>
            <person name="Thomas P."/>
            <person name="Tinkham L.E."/>
            <person name="Zeruth G.T."/>
        </authorList>
    </citation>
    <scope>NUCLEOTIDE SEQUENCE [LARGE SCALE GENOMIC DNA]</scope>
    <source>
        <strain>DSM 25203 / XCL-2</strain>
    </source>
</reference>
<comment type="function">
    <text evidence="1">Specifically methylates the uridine in position 2552 of 23S rRNA at the 2'-O position of the ribose in the fully assembled 50S ribosomal subunit.</text>
</comment>
<comment type="catalytic activity">
    <reaction evidence="1">
        <text>uridine(2552) in 23S rRNA + S-adenosyl-L-methionine = 2'-O-methyluridine(2552) in 23S rRNA + S-adenosyl-L-homocysteine + H(+)</text>
        <dbReference type="Rhea" id="RHEA:42720"/>
        <dbReference type="Rhea" id="RHEA-COMP:10202"/>
        <dbReference type="Rhea" id="RHEA-COMP:10203"/>
        <dbReference type="ChEBI" id="CHEBI:15378"/>
        <dbReference type="ChEBI" id="CHEBI:57856"/>
        <dbReference type="ChEBI" id="CHEBI:59789"/>
        <dbReference type="ChEBI" id="CHEBI:65315"/>
        <dbReference type="ChEBI" id="CHEBI:74478"/>
        <dbReference type="EC" id="2.1.1.166"/>
    </reaction>
</comment>
<comment type="subcellular location">
    <subcellularLocation>
        <location evidence="1">Cytoplasm</location>
    </subcellularLocation>
</comment>
<comment type="similarity">
    <text evidence="1">Belongs to the class I-like SAM-binding methyltransferase superfamily. RNA methyltransferase RlmE family.</text>
</comment>
<evidence type="ECO:0000255" key="1">
    <source>
        <dbReference type="HAMAP-Rule" id="MF_01547"/>
    </source>
</evidence>